<organism>
    <name type="scientific">Simian immunodeficiency virus (isolate PBj14/BCL-3)</name>
    <name type="common">SIV-sm</name>
    <name type="synonym">Simian immunodeficiency virus sooty mangabey monkey</name>
    <dbReference type="NCBI Taxonomy" id="11738"/>
    <lineage>
        <taxon>Viruses</taxon>
        <taxon>Riboviria</taxon>
        <taxon>Pararnavirae</taxon>
        <taxon>Artverviricota</taxon>
        <taxon>Revtraviricetes</taxon>
        <taxon>Ortervirales</taxon>
        <taxon>Retroviridae</taxon>
        <taxon>Orthoretrovirinae</taxon>
        <taxon>Lentivirus</taxon>
        <taxon>Simian immunodeficiency virus</taxon>
    </lineage>
</organism>
<protein>
    <recommendedName>
        <fullName>Protein Nef</fullName>
    </recommendedName>
    <alternativeName>
        <fullName>3'ORF</fullName>
    </alternativeName>
    <alternativeName>
        <fullName>Negative factor</fullName>
        <shortName>F-protein</shortName>
    </alternativeName>
</protein>
<gene>
    <name type="primary">nef</name>
</gene>
<comment type="function">
    <text evidence="1">Seems to play a role in optimizing the host cell environment for viral replication without causing cell death by apoptosis. Enhances virus infectivity and pathogenicity. Probably involved in viral immune evasion mechanisms (By similarity).</text>
</comment>
<comment type="function">
    <text evidence="1">In infected CD4(+) T-lymphocytes, down-regulates cell surface expression of CD4, CD28, CD3, and MHC-I or MHC-II molecules.</text>
</comment>
<comment type="function">
    <text evidence="1">Interferes with TCR signaling from the cell membrane. Interacts with CD247/TCRZ (TCR zeta chain) and exert potent down-regulation of cell surface TCR/CD3 complexes (By similarity).</text>
</comment>
<comment type="subunit">
    <text evidence="1">Homodimer (By similarity). Interacts with host CD247/TCRZ; this interaction induces down-regulation of cell surface TCR/CD3 complexes.</text>
</comment>
<comment type="subcellular location">
    <subcellularLocation>
        <location evidence="1">Host cell membrane</location>
        <topology evidence="1">Lipid-anchor</topology>
        <orientation evidence="1">Cytoplasmic side</orientation>
    </subcellularLocation>
    <text evidence="1">Associates with the inner plasma membrane through its N-terminal domain.</text>
</comment>
<comment type="domain">
    <text evidence="1">The N-terminal domain is composed of the N-myristoyl glycine and of a cluster of positively charged amino acids. It is required for inner plasma membrane targeting of Nef (By similarity).</text>
</comment>
<comment type="similarity">
    <text evidence="2">Belongs to the lentivirus primate group Nef protein family.</text>
</comment>
<name>NEF_SIVSP</name>
<organismHost>
    <name type="scientific">Cercopithecidae</name>
    <name type="common">Old World monkeys</name>
    <dbReference type="NCBI Taxonomy" id="9527"/>
</organismHost>
<accession>P19501</accession>
<dbReference type="EMBL" id="L03298">
    <property type="protein sequence ID" value="AAA47782.1"/>
    <property type="molecule type" value="Genomic_RNA"/>
</dbReference>
<dbReference type="EMBL" id="M31325">
    <property type="protein sequence ID" value="AAA47758.1"/>
    <property type="molecule type" value="Genomic_RNA"/>
</dbReference>
<dbReference type="SMR" id="P19501"/>
<dbReference type="Proteomes" id="UP000007221">
    <property type="component" value="Segment"/>
</dbReference>
<dbReference type="GO" id="GO:0020002">
    <property type="term" value="C:host cell plasma membrane"/>
    <property type="evidence" value="ECO:0007669"/>
    <property type="project" value="UniProtKB-SubCell"/>
</dbReference>
<dbReference type="GO" id="GO:0016020">
    <property type="term" value="C:membrane"/>
    <property type="evidence" value="ECO:0007669"/>
    <property type="project" value="UniProtKB-KW"/>
</dbReference>
<dbReference type="GO" id="GO:0005525">
    <property type="term" value="F:GTP binding"/>
    <property type="evidence" value="ECO:0007669"/>
    <property type="project" value="InterPro"/>
</dbReference>
<dbReference type="Gene3D" id="3.30.62.10">
    <property type="entry name" value="Nef Regulatory Factor"/>
    <property type="match status" value="1"/>
</dbReference>
<dbReference type="InterPro" id="IPR027481">
    <property type="entry name" value="HIV-1_Nef_core_sf"/>
</dbReference>
<dbReference type="InterPro" id="IPR001558">
    <property type="entry name" value="HIV_Nef"/>
</dbReference>
<dbReference type="Pfam" id="PF00469">
    <property type="entry name" value="F-protein"/>
    <property type="match status" value="1"/>
</dbReference>
<dbReference type="SUPFAM" id="SSF55671">
    <property type="entry name" value="Regulatory factor Nef"/>
    <property type="match status" value="1"/>
</dbReference>
<evidence type="ECO:0000250" key="1"/>
<evidence type="ECO:0000305" key="2"/>
<feature type="initiator methionine" description="Removed; by host" evidence="1">
    <location>
        <position position="1"/>
    </location>
</feature>
<feature type="chain" id="PRO_0000085249" description="Protein Nef">
    <location>
        <begin position="2"/>
        <end position="261"/>
    </location>
</feature>
<feature type="region of interest" description="Acidic">
    <location>
        <begin position="88"/>
        <end position="94"/>
    </location>
</feature>
<feature type="region of interest" description="Mediates dimerization" evidence="1">
    <location>
        <begin position="138"/>
        <end position="154"/>
    </location>
</feature>
<feature type="lipid moiety-binding region" description="N-myristoyl glycine; by host" evidence="1">
    <location>
        <position position="2"/>
    </location>
</feature>
<keyword id="KW-1032">Host cell membrane</keyword>
<keyword id="KW-1043">Host membrane</keyword>
<keyword id="KW-0945">Host-virus interaction</keyword>
<keyword id="KW-0449">Lipoprotein</keyword>
<keyword id="KW-0472">Membrane</keyword>
<keyword id="KW-0519">Myristate</keyword>
<keyword id="KW-0899">Viral immunoevasion</keyword>
<keyword id="KW-0843">Virulence</keyword>
<reference key="1">
    <citation type="journal article" date="1990" name="Nature">
        <title>Sequence analysis and acute pathogenicity of molecularly cloned SIVSMM-PBj14.</title>
        <authorList>
            <person name="Dewhurst S."/>
            <person name="Embretson J.E."/>
            <person name="Anderson D.C."/>
            <person name="Mullins J.I."/>
            <person name="Fultz P.N."/>
        </authorList>
    </citation>
    <scope>NUCLEOTIDE SEQUENCE [GENOMIC RNA]</scope>
</reference>
<reference key="2">
    <citation type="journal article" date="1992" name="AIDS Res. Hum. Retroviruses">
        <title>Molecular clones from a non-acutely pathogenic derivative of SIVsmmPBj14: characterization and comparison to acutely pathogenic clones.</title>
        <authorList>
            <person name="Dewhurst S."/>
            <person name="Embretson J.E."/>
            <person name="Fultz P.N."/>
            <person name="Mullins J.I."/>
        </authorList>
    </citation>
    <scope>NUCLEOTIDE SEQUENCE [GENOMIC RNA]</scope>
</reference>
<proteinExistence type="inferred from homology"/>
<sequence length="261" mass="30088">MGGVTSKKQRRRGGNLYERLLQARGETYGRLWEGLEGEYSQSQDASGKGLSSLSCEPQKYCEGQFMNTPWRNPATERAKLDYRQQNMDDVDSADLVGCPVSPRVPVRIMTYKLAIDMSHFIKEKGGLEGIYYSDRRHKILDLYLEKEEGIIPDWQNYTAGPGIRYPMFFGWLWKLVPVNVSDEAQEDETHYLMHPAQTSQWDDPWGEVLAWKFDPKLAYNYKAFVEHPEEFGSQSGLSKEEVQRRLTARGLLKMADKKKTS</sequence>